<proteinExistence type="inferred from homology"/>
<comment type="function">
    <text evidence="1">Catalyzes the attachment of glutamate to tRNA(Glu) in a two-step reaction: glutamate is first activated by ATP to form Glu-AMP and then transferred to the acceptor end of tRNA(Glu).</text>
</comment>
<comment type="catalytic activity">
    <reaction evidence="1">
        <text>tRNA(Glu) + L-glutamate + ATP = L-glutamyl-tRNA(Glu) + AMP + diphosphate</text>
        <dbReference type="Rhea" id="RHEA:23540"/>
        <dbReference type="Rhea" id="RHEA-COMP:9663"/>
        <dbReference type="Rhea" id="RHEA-COMP:9680"/>
        <dbReference type="ChEBI" id="CHEBI:29985"/>
        <dbReference type="ChEBI" id="CHEBI:30616"/>
        <dbReference type="ChEBI" id="CHEBI:33019"/>
        <dbReference type="ChEBI" id="CHEBI:78442"/>
        <dbReference type="ChEBI" id="CHEBI:78520"/>
        <dbReference type="ChEBI" id="CHEBI:456215"/>
        <dbReference type="EC" id="6.1.1.17"/>
    </reaction>
</comment>
<comment type="cofactor">
    <cofactor evidence="1">
        <name>Zn(2+)</name>
        <dbReference type="ChEBI" id="CHEBI:29105"/>
    </cofactor>
    <text evidence="1">Binds 1 zinc ion per subunit.</text>
</comment>
<comment type="subunit">
    <text evidence="1">Monomer.</text>
</comment>
<comment type="subcellular location">
    <subcellularLocation>
        <location evidence="1">Cytoplasm</location>
    </subcellularLocation>
</comment>
<comment type="similarity">
    <text evidence="1">Belongs to the class-I aminoacyl-tRNA synthetase family. Glutamate--tRNA ligase type 1 subfamily.</text>
</comment>
<protein>
    <recommendedName>
        <fullName evidence="1">Glutamate--tRNA ligase</fullName>
        <ecNumber evidence="1">6.1.1.17</ecNumber>
    </recommendedName>
    <alternativeName>
        <fullName evidence="1">Glutamyl-tRNA synthetase</fullName>
        <shortName evidence="1">GluRS</shortName>
    </alternativeName>
</protein>
<gene>
    <name evidence="1" type="primary">gltX</name>
    <name type="ordered locus">SARI_00469</name>
</gene>
<sequence length="471" mass="53693">MKIKTRFAPSPTGYLHVGGARTALYSWLFARHHGGEFVLRIEDTDLERSTPEAIEAIMDGMNWLNLEWDEGPYFQTKRFDRYNAVIDEMLEAGTAYKCYCSKERLDQLREEQMAKGEKPRYDGRCRHSHEHHADDEPCVVRFANPQDGSVIFDDQIRGPIEFSNQELDDLIIRRTDGSPTYNFCVVVDDWDMEITHVIRGEDHINNTPRQINILKALNAPVPMYAHVSMINGDDGKKLSKRHGAVSVMQYRDDGYLPEALLNYLVRLGWSNGDQEIFTREEMINLFSLGAVSKSSSAFNTDKLLWLNHHYINTLAPEYVATHLQWHIEQENIDTRNGPQLAELVKLLGERCKTLKEMAQSCRYFYEDFSEFDADAAKKHLRPVARQPLEVVRDKLSAITDWSAENVHHAIQSTAEELEVGMGKVGMPLRVAVTGAGQSPALDVTVHAIGKTRSIERINKALGFIAERESQQ</sequence>
<feature type="chain" id="PRO_1000074330" description="Glutamate--tRNA ligase">
    <location>
        <begin position="1"/>
        <end position="471"/>
    </location>
</feature>
<feature type="short sequence motif" description="'HIGH' region" evidence="1">
    <location>
        <begin position="9"/>
        <end position="19"/>
    </location>
</feature>
<feature type="short sequence motif" description="'KMSKS' region" evidence="1">
    <location>
        <begin position="237"/>
        <end position="241"/>
    </location>
</feature>
<feature type="binding site" evidence="1">
    <location>
        <position position="98"/>
    </location>
    <ligand>
        <name>Zn(2+)</name>
        <dbReference type="ChEBI" id="CHEBI:29105"/>
    </ligand>
</feature>
<feature type="binding site" evidence="1">
    <location>
        <position position="100"/>
    </location>
    <ligand>
        <name>Zn(2+)</name>
        <dbReference type="ChEBI" id="CHEBI:29105"/>
    </ligand>
</feature>
<feature type="binding site" evidence="1">
    <location>
        <position position="125"/>
    </location>
    <ligand>
        <name>Zn(2+)</name>
        <dbReference type="ChEBI" id="CHEBI:29105"/>
    </ligand>
</feature>
<feature type="binding site" evidence="1">
    <location>
        <position position="127"/>
    </location>
    <ligand>
        <name>Zn(2+)</name>
        <dbReference type="ChEBI" id="CHEBI:29105"/>
    </ligand>
</feature>
<feature type="binding site" evidence="1">
    <location>
        <position position="240"/>
    </location>
    <ligand>
        <name>ATP</name>
        <dbReference type="ChEBI" id="CHEBI:30616"/>
    </ligand>
</feature>
<reference key="1">
    <citation type="submission" date="2007-11" db="EMBL/GenBank/DDBJ databases">
        <authorList>
            <consortium name="The Salmonella enterica serovar Arizonae Genome Sequencing Project"/>
            <person name="McClelland M."/>
            <person name="Sanderson E.K."/>
            <person name="Porwollik S."/>
            <person name="Spieth J."/>
            <person name="Clifton W.S."/>
            <person name="Fulton R."/>
            <person name="Chunyan W."/>
            <person name="Wollam A."/>
            <person name="Shah N."/>
            <person name="Pepin K."/>
            <person name="Bhonagiri V."/>
            <person name="Nash W."/>
            <person name="Johnson M."/>
            <person name="Thiruvilangam P."/>
            <person name="Wilson R."/>
        </authorList>
    </citation>
    <scope>NUCLEOTIDE SEQUENCE [LARGE SCALE GENOMIC DNA]</scope>
    <source>
        <strain>ATCC BAA-731 / CDC346-86 / RSK2980</strain>
    </source>
</reference>
<evidence type="ECO:0000255" key="1">
    <source>
        <dbReference type="HAMAP-Rule" id="MF_00022"/>
    </source>
</evidence>
<keyword id="KW-0030">Aminoacyl-tRNA synthetase</keyword>
<keyword id="KW-0067">ATP-binding</keyword>
<keyword id="KW-0963">Cytoplasm</keyword>
<keyword id="KW-0436">Ligase</keyword>
<keyword id="KW-0479">Metal-binding</keyword>
<keyword id="KW-0547">Nucleotide-binding</keyword>
<keyword id="KW-0648">Protein biosynthesis</keyword>
<keyword id="KW-1185">Reference proteome</keyword>
<keyword id="KW-0862">Zinc</keyword>
<accession>A9MIG3</accession>
<name>SYE_SALAR</name>
<dbReference type="EC" id="6.1.1.17" evidence="1"/>
<dbReference type="EMBL" id="CP000880">
    <property type="protein sequence ID" value="ABX20400.1"/>
    <property type="molecule type" value="Genomic_DNA"/>
</dbReference>
<dbReference type="SMR" id="A9MIG3"/>
<dbReference type="STRING" id="41514.SARI_00469"/>
<dbReference type="KEGG" id="ses:SARI_00469"/>
<dbReference type="HOGENOM" id="CLU_015768_6_0_6"/>
<dbReference type="Proteomes" id="UP000002084">
    <property type="component" value="Chromosome"/>
</dbReference>
<dbReference type="GO" id="GO:0005829">
    <property type="term" value="C:cytosol"/>
    <property type="evidence" value="ECO:0007669"/>
    <property type="project" value="TreeGrafter"/>
</dbReference>
<dbReference type="GO" id="GO:0005524">
    <property type="term" value="F:ATP binding"/>
    <property type="evidence" value="ECO:0007669"/>
    <property type="project" value="UniProtKB-UniRule"/>
</dbReference>
<dbReference type="GO" id="GO:0004818">
    <property type="term" value="F:glutamate-tRNA ligase activity"/>
    <property type="evidence" value="ECO:0007669"/>
    <property type="project" value="UniProtKB-UniRule"/>
</dbReference>
<dbReference type="GO" id="GO:0000049">
    <property type="term" value="F:tRNA binding"/>
    <property type="evidence" value="ECO:0007669"/>
    <property type="project" value="InterPro"/>
</dbReference>
<dbReference type="GO" id="GO:0008270">
    <property type="term" value="F:zinc ion binding"/>
    <property type="evidence" value="ECO:0007669"/>
    <property type="project" value="UniProtKB-UniRule"/>
</dbReference>
<dbReference type="GO" id="GO:0006424">
    <property type="term" value="P:glutamyl-tRNA aminoacylation"/>
    <property type="evidence" value="ECO:0007669"/>
    <property type="project" value="UniProtKB-UniRule"/>
</dbReference>
<dbReference type="CDD" id="cd00808">
    <property type="entry name" value="GluRS_core"/>
    <property type="match status" value="1"/>
</dbReference>
<dbReference type="FunFam" id="1.10.10.350:FF:000001">
    <property type="entry name" value="Glutamate--tRNA ligase"/>
    <property type="match status" value="1"/>
</dbReference>
<dbReference type="FunFam" id="3.40.50.620:FF:000007">
    <property type="entry name" value="Glutamate--tRNA ligase"/>
    <property type="match status" value="1"/>
</dbReference>
<dbReference type="Gene3D" id="1.10.10.350">
    <property type="match status" value="1"/>
</dbReference>
<dbReference type="Gene3D" id="3.40.50.620">
    <property type="entry name" value="HUPs"/>
    <property type="match status" value="1"/>
</dbReference>
<dbReference type="HAMAP" id="MF_00022">
    <property type="entry name" value="Glu_tRNA_synth_type1"/>
    <property type="match status" value="1"/>
</dbReference>
<dbReference type="InterPro" id="IPR045462">
    <property type="entry name" value="aa-tRNA-synth_I_cd-bd"/>
</dbReference>
<dbReference type="InterPro" id="IPR020751">
    <property type="entry name" value="aa-tRNA-synth_I_codon-bd_sub2"/>
</dbReference>
<dbReference type="InterPro" id="IPR001412">
    <property type="entry name" value="aa-tRNA-synth_I_CS"/>
</dbReference>
<dbReference type="InterPro" id="IPR008925">
    <property type="entry name" value="aa_tRNA-synth_I_cd-bd_sf"/>
</dbReference>
<dbReference type="InterPro" id="IPR004527">
    <property type="entry name" value="Glu-tRNA-ligase_bac/mito"/>
</dbReference>
<dbReference type="InterPro" id="IPR000924">
    <property type="entry name" value="Glu/Gln-tRNA-synth"/>
</dbReference>
<dbReference type="InterPro" id="IPR020058">
    <property type="entry name" value="Glu/Gln-tRNA-synth_Ib_cat-dom"/>
</dbReference>
<dbReference type="InterPro" id="IPR049940">
    <property type="entry name" value="GluQ/Sye"/>
</dbReference>
<dbReference type="InterPro" id="IPR033910">
    <property type="entry name" value="GluRS_core"/>
</dbReference>
<dbReference type="InterPro" id="IPR014729">
    <property type="entry name" value="Rossmann-like_a/b/a_fold"/>
</dbReference>
<dbReference type="NCBIfam" id="TIGR00464">
    <property type="entry name" value="gltX_bact"/>
    <property type="match status" value="1"/>
</dbReference>
<dbReference type="PANTHER" id="PTHR43311">
    <property type="entry name" value="GLUTAMATE--TRNA LIGASE"/>
    <property type="match status" value="1"/>
</dbReference>
<dbReference type="PANTHER" id="PTHR43311:SF2">
    <property type="entry name" value="GLUTAMATE--TRNA LIGASE, MITOCHONDRIAL-RELATED"/>
    <property type="match status" value="1"/>
</dbReference>
<dbReference type="Pfam" id="PF19269">
    <property type="entry name" value="Anticodon_2"/>
    <property type="match status" value="1"/>
</dbReference>
<dbReference type="Pfam" id="PF00749">
    <property type="entry name" value="tRNA-synt_1c"/>
    <property type="match status" value="1"/>
</dbReference>
<dbReference type="PRINTS" id="PR00987">
    <property type="entry name" value="TRNASYNTHGLU"/>
</dbReference>
<dbReference type="SUPFAM" id="SSF48163">
    <property type="entry name" value="An anticodon-binding domain of class I aminoacyl-tRNA synthetases"/>
    <property type="match status" value="1"/>
</dbReference>
<dbReference type="SUPFAM" id="SSF52374">
    <property type="entry name" value="Nucleotidylyl transferase"/>
    <property type="match status" value="1"/>
</dbReference>
<dbReference type="PROSITE" id="PS00178">
    <property type="entry name" value="AA_TRNA_LIGASE_I"/>
    <property type="match status" value="1"/>
</dbReference>
<organism>
    <name type="scientific">Salmonella arizonae (strain ATCC BAA-731 / CDC346-86 / RSK2980)</name>
    <dbReference type="NCBI Taxonomy" id="41514"/>
    <lineage>
        <taxon>Bacteria</taxon>
        <taxon>Pseudomonadati</taxon>
        <taxon>Pseudomonadota</taxon>
        <taxon>Gammaproteobacteria</taxon>
        <taxon>Enterobacterales</taxon>
        <taxon>Enterobacteriaceae</taxon>
        <taxon>Salmonella</taxon>
    </lineage>
</organism>